<name>HAUS3_XENLA</name>
<protein>
    <recommendedName>
        <fullName>HAUS augmin-like complex subunit 3</fullName>
    </recommendedName>
</protein>
<organism>
    <name type="scientific">Xenopus laevis</name>
    <name type="common">African clawed frog</name>
    <dbReference type="NCBI Taxonomy" id="8355"/>
    <lineage>
        <taxon>Eukaryota</taxon>
        <taxon>Metazoa</taxon>
        <taxon>Chordata</taxon>
        <taxon>Craniata</taxon>
        <taxon>Vertebrata</taxon>
        <taxon>Euteleostomi</taxon>
        <taxon>Amphibia</taxon>
        <taxon>Batrachia</taxon>
        <taxon>Anura</taxon>
        <taxon>Pipoidea</taxon>
        <taxon>Pipidae</taxon>
        <taxon>Xenopodinae</taxon>
        <taxon>Xenopus</taxon>
        <taxon>Xenopus</taxon>
    </lineage>
</organism>
<gene>
    <name type="primary">haus3</name>
</gene>
<comment type="function">
    <text evidence="1">Contributes to mitotic spindle assembly, maintenance of centrosome integrity and completion of cytokinesis as part of the HAUS augmin-like complex.</text>
</comment>
<comment type="subunit">
    <text evidence="2">Component of the HAUS augmin-like complex. The complex interacts with the gamma-tubulin ring complex and this interaction is required for spindle assembly (By similarity).</text>
</comment>
<comment type="subcellular location">
    <subcellularLocation>
        <location evidence="2">Cytoplasm</location>
        <location evidence="2">Cytoskeleton</location>
        <location evidence="2">Microtubule organizing center</location>
        <location evidence="2">Centrosome</location>
    </subcellularLocation>
    <subcellularLocation>
        <location evidence="2">Cytoplasm</location>
        <location evidence="2">Cytoskeleton</location>
        <location evidence="2">Spindle</location>
    </subcellularLocation>
    <text evidence="2">Localizes to interphase centrosomes and to mitotic spindle microtubules.</text>
</comment>
<comment type="similarity">
    <text evidence="4">Belongs to the HAUS3 family.</text>
</comment>
<keyword id="KW-0002">3D-structure</keyword>
<keyword id="KW-0131">Cell cycle</keyword>
<keyword id="KW-0132">Cell division</keyword>
<keyword id="KW-0175">Coiled coil</keyword>
<keyword id="KW-0963">Cytoplasm</keyword>
<keyword id="KW-0206">Cytoskeleton</keyword>
<keyword id="KW-0493">Microtubule</keyword>
<keyword id="KW-0498">Mitosis</keyword>
<keyword id="KW-1185">Reference proteome</keyword>
<sequence>MSGGDRFVQTLQKLNYPKGAQLDGEDFDWLFEAVDLKPFLDWFCSAASEQNVVPDEKLQAFNTLKESGKPVLDEKALDEVLKTFSISKVPAIEEVAIEKLEEEVKALQKQKNLHIRRRNKLQMVESGNRQMCLKSKDKEEETGRAFQEVLHLLRVTNKKLNHELQSIVNGVQTLMSFFSTPETACELSSQPIFLSQLLLDKYLSLEEQSTAALTSFTKEHFFEGMSKFVEGSDENFQLVQLNVNSFGEDGTTEDKCKEMMRLQLAYICAKHKLIQMKAKSASLKVGLQWAENNASVVQDKASQKEENLKVRITSLKNETLQIENHTNSISNEKLPGLVRDNAQLLNMPIVKGDYDLQMAHQTSCSSRQDLVCDHLMKQKASFELLQLGYELELRKHRDVYRELGSIVQELKESGDKLEERLTMLSDVNLLSASKPRSNIDSKDLTSHRLYQLLDGDNTQKLFRTYDGLESVAQKLSQDIASMRDQLEVSEQEHSLLLSKLDSHLKELRDFMYPEGNTLMLTTPELSGEFHQLGSQLEKLNHITVEILGDLQLKRKMLESNKLQQIEKQLYVYFFQNEEQLKSIVGKLEAQTGGGSSA</sequence>
<dbReference type="EMBL" id="BC077843">
    <property type="protein sequence ID" value="AAH77843.1"/>
    <property type="molecule type" value="mRNA"/>
</dbReference>
<dbReference type="RefSeq" id="NP_001086973.1">
    <property type="nucleotide sequence ID" value="NM_001093504.1"/>
</dbReference>
<dbReference type="PDB" id="8AT2">
    <property type="method" value="EM"/>
    <property type="resolution" value="7.70 A"/>
    <property type="chains" value="C=1-597"/>
</dbReference>
<dbReference type="PDB" id="8AT3">
    <property type="method" value="EM"/>
    <property type="resolution" value="33.00 A"/>
    <property type="chains" value="B=1-597"/>
</dbReference>
<dbReference type="PDB" id="8AT4">
    <property type="method" value="EM"/>
    <property type="resolution" value="33.00 A"/>
    <property type="chains" value="B=1-597"/>
</dbReference>
<dbReference type="PDB" id="8FCK">
    <property type="method" value="EM"/>
    <property type="resolution" value="6.88 A"/>
    <property type="chains" value="B=1-597"/>
</dbReference>
<dbReference type="PDBsum" id="8AT2"/>
<dbReference type="PDBsum" id="8AT3"/>
<dbReference type="PDBsum" id="8AT4"/>
<dbReference type="PDBsum" id="8FCK"/>
<dbReference type="EMDB" id="EMD-15631"/>
<dbReference type="EMDB" id="EMD-15632"/>
<dbReference type="EMDB" id="EMD-15633"/>
<dbReference type="EMDB" id="EMD-28981"/>
<dbReference type="SMR" id="Q6DCY9"/>
<dbReference type="DNASU" id="446808"/>
<dbReference type="GeneID" id="446808"/>
<dbReference type="KEGG" id="xla:446808"/>
<dbReference type="AGR" id="Xenbase:XB-GENE-6255109"/>
<dbReference type="CTD" id="446808"/>
<dbReference type="Xenbase" id="XB-GENE-6255109">
    <property type="gene designation" value="haus3l.L"/>
</dbReference>
<dbReference type="OrthoDB" id="2159690at2759"/>
<dbReference type="Proteomes" id="UP000186698">
    <property type="component" value="Chromosome 1L"/>
</dbReference>
<dbReference type="Bgee" id="446808">
    <property type="expression patterns" value="Expressed in blastula and 17 other cell types or tissues"/>
</dbReference>
<dbReference type="GO" id="GO:0005813">
    <property type="term" value="C:centrosome"/>
    <property type="evidence" value="ECO:0007669"/>
    <property type="project" value="UniProtKB-SubCell"/>
</dbReference>
<dbReference type="GO" id="GO:0005737">
    <property type="term" value="C:cytoplasm"/>
    <property type="evidence" value="ECO:0007669"/>
    <property type="project" value="UniProtKB-KW"/>
</dbReference>
<dbReference type="GO" id="GO:0070652">
    <property type="term" value="C:HAUS complex"/>
    <property type="evidence" value="ECO:0000250"/>
    <property type="project" value="UniProtKB"/>
</dbReference>
<dbReference type="GO" id="GO:0005815">
    <property type="term" value="C:microtubule organizing center"/>
    <property type="evidence" value="ECO:0000318"/>
    <property type="project" value="GO_Central"/>
</dbReference>
<dbReference type="GO" id="GO:0072686">
    <property type="term" value="C:mitotic spindle"/>
    <property type="evidence" value="ECO:0000318"/>
    <property type="project" value="GO_Central"/>
</dbReference>
<dbReference type="GO" id="GO:1990498">
    <property type="term" value="C:mitotic spindle microtubule"/>
    <property type="evidence" value="ECO:0000250"/>
    <property type="project" value="UniProtKB"/>
</dbReference>
<dbReference type="GO" id="GO:0051301">
    <property type="term" value="P:cell division"/>
    <property type="evidence" value="ECO:0007669"/>
    <property type="project" value="UniProtKB-KW"/>
</dbReference>
<dbReference type="GO" id="GO:0007098">
    <property type="term" value="P:centrosome cycle"/>
    <property type="evidence" value="ECO:0000250"/>
    <property type="project" value="UniProtKB"/>
</dbReference>
<dbReference type="GO" id="GO:0031023">
    <property type="term" value="P:microtubule organizing center organization"/>
    <property type="evidence" value="ECO:0000318"/>
    <property type="project" value="GO_Central"/>
</dbReference>
<dbReference type="GO" id="GO:0051225">
    <property type="term" value="P:spindle assembly"/>
    <property type="evidence" value="ECO:0000250"/>
    <property type="project" value="UniProtKB"/>
</dbReference>
<dbReference type="InterPro" id="IPR026206">
    <property type="entry name" value="HAUS3"/>
</dbReference>
<dbReference type="InterPro" id="IPR032733">
    <property type="entry name" value="HAUS3_N"/>
</dbReference>
<dbReference type="PANTHER" id="PTHR19378">
    <property type="entry name" value="GOLGIN- RELATED"/>
    <property type="match status" value="1"/>
</dbReference>
<dbReference type="PANTHER" id="PTHR19378:SF5">
    <property type="entry name" value="HAUS AUGMIN-LIKE COMPLEX SUBUNIT 3"/>
    <property type="match status" value="1"/>
</dbReference>
<dbReference type="Pfam" id="PF14932">
    <property type="entry name" value="HAUS-augmin3"/>
    <property type="match status" value="1"/>
</dbReference>
<dbReference type="PRINTS" id="PR02089">
    <property type="entry name" value="HAUSAUGMINL3"/>
</dbReference>
<proteinExistence type="evidence at protein level"/>
<evidence type="ECO:0000250" key="1"/>
<evidence type="ECO:0000250" key="2">
    <source>
        <dbReference type="UniProtKB" id="Q68CZ6"/>
    </source>
</evidence>
<evidence type="ECO:0000255" key="3"/>
<evidence type="ECO:0000305" key="4"/>
<feature type="chain" id="PRO_0000301953" description="HAUS augmin-like complex subunit 3">
    <location>
        <begin position="1"/>
        <end position="597"/>
    </location>
</feature>
<feature type="coiled-coil region" evidence="3">
    <location>
        <begin position="91"/>
        <end position="123"/>
    </location>
</feature>
<feature type="coiled-coil region" evidence="3">
    <location>
        <begin position="290"/>
        <end position="319"/>
    </location>
</feature>
<feature type="coiled-coil region" evidence="3">
    <location>
        <begin position="392"/>
        <end position="428"/>
    </location>
</feature>
<feature type="coiled-coil region" evidence="3">
    <location>
        <begin position="463"/>
        <end position="494"/>
    </location>
</feature>
<accession>Q6DCY9</accession>
<reference key="1">
    <citation type="submission" date="2004-07" db="EMBL/GenBank/DDBJ databases">
        <authorList>
            <consortium name="NIH - Xenopus Gene Collection (XGC) project"/>
        </authorList>
    </citation>
    <scope>NUCLEOTIDE SEQUENCE [LARGE SCALE MRNA]</scope>
    <source>
        <tissue>Embryo</tissue>
    </source>
</reference>